<reference key="1">
    <citation type="journal article" date="2001" name="Nature">
        <title>Genome sequence of enterohaemorrhagic Escherichia coli O157:H7.</title>
        <authorList>
            <person name="Perna N.T."/>
            <person name="Plunkett G. III"/>
            <person name="Burland V."/>
            <person name="Mau B."/>
            <person name="Glasner J.D."/>
            <person name="Rose D.J."/>
            <person name="Mayhew G.F."/>
            <person name="Evans P.S."/>
            <person name="Gregor J."/>
            <person name="Kirkpatrick H.A."/>
            <person name="Posfai G."/>
            <person name="Hackett J."/>
            <person name="Klink S."/>
            <person name="Boutin A."/>
            <person name="Shao Y."/>
            <person name="Miller L."/>
            <person name="Grotbeck E.J."/>
            <person name="Davis N.W."/>
            <person name="Lim A."/>
            <person name="Dimalanta E.T."/>
            <person name="Potamousis K."/>
            <person name="Apodaca J."/>
            <person name="Anantharaman T.S."/>
            <person name="Lin J."/>
            <person name="Yen G."/>
            <person name="Schwartz D.C."/>
            <person name="Welch R.A."/>
            <person name="Blattner F.R."/>
        </authorList>
    </citation>
    <scope>NUCLEOTIDE SEQUENCE [LARGE SCALE GENOMIC DNA]</scope>
    <source>
        <strain>O157:H7 / EDL933 / ATCC 700927 / EHEC</strain>
    </source>
</reference>
<reference key="2">
    <citation type="journal article" date="2001" name="DNA Res.">
        <title>Complete genome sequence of enterohemorrhagic Escherichia coli O157:H7 and genomic comparison with a laboratory strain K-12.</title>
        <authorList>
            <person name="Hayashi T."/>
            <person name="Makino K."/>
            <person name="Ohnishi M."/>
            <person name="Kurokawa K."/>
            <person name="Ishii K."/>
            <person name="Yokoyama K."/>
            <person name="Han C.-G."/>
            <person name="Ohtsubo E."/>
            <person name="Nakayama K."/>
            <person name="Murata T."/>
            <person name="Tanaka M."/>
            <person name="Tobe T."/>
            <person name="Iida T."/>
            <person name="Takami H."/>
            <person name="Honda T."/>
            <person name="Sasakawa C."/>
            <person name="Ogasawara N."/>
            <person name="Yasunaga T."/>
            <person name="Kuhara S."/>
            <person name="Shiba T."/>
            <person name="Hattori M."/>
            <person name="Shinagawa H."/>
        </authorList>
    </citation>
    <scope>NUCLEOTIDE SEQUENCE [LARGE SCALE GENOMIC DNA]</scope>
    <source>
        <strain>O157:H7 / Sakai / RIMD 0509952 / EHEC</strain>
    </source>
</reference>
<dbReference type="EC" id="4.1.2.50"/>
<dbReference type="EMBL" id="AE005174">
    <property type="protein sequence ID" value="AAG57873.1"/>
    <property type="molecule type" value="Genomic_DNA"/>
</dbReference>
<dbReference type="EMBL" id="BA000007">
    <property type="protein sequence ID" value="BAB37043.1"/>
    <property type="molecule type" value="Genomic_DNA"/>
</dbReference>
<dbReference type="PIR" id="D91081">
    <property type="entry name" value="D91081"/>
</dbReference>
<dbReference type="PIR" id="E85926">
    <property type="entry name" value="E85926"/>
</dbReference>
<dbReference type="RefSeq" id="NP_311647.1">
    <property type="nucleotide sequence ID" value="NC_002695.1"/>
</dbReference>
<dbReference type="SMR" id="P65871"/>
<dbReference type="STRING" id="155864.Z4075"/>
<dbReference type="GeneID" id="914658"/>
<dbReference type="KEGG" id="ece:Z4075"/>
<dbReference type="KEGG" id="ecs:ECs_3620"/>
<dbReference type="PATRIC" id="fig|386585.9.peg.3784"/>
<dbReference type="eggNOG" id="COG0720">
    <property type="taxonomic scope" value="Bacteria"/>
</dbReference>
<dbReference type="HOGENOM" id="CLU_111016_6_1_6"/>
<dbReference type="OMA" id="CTSGCIY"/>
<dbReference type="UniPathway" id="UPA00391"/>
<dbReference type="Proteomes" id="UP000000558">
    <property type="component" value="Chromosome"/>
</dbReference>
<dbReference type="Proteomes" id="UP000002519">
    <property type="component" value="Chromosome"/>
</dbReference>
<dbReference type="GO" id="GO:0070497">
    <property type="term" value="F:6-carboxytetrahydropterin synthase activity"/>
    <property type="evidence" value="ECO:0007669"/>
    <property type="project" value="UniProtKB-EC"/>
</dbReference>
<dbReference type="GO" id="GO:0046872">
    <property type="term" value="F:metal ion binding"/>
    <property type="evidence" value="ECO:0007669"/>
    <property type="project" value="UniProtKB-KW"/>
</dbReference>
<dbReference type="GO" id="GO:0008616">
    <property type="term" value="P:queuosine biosynthetic process"/>
    <property type="evidence" value="ECO:0007669"/>
    <property type="project" value="UniProtKB-KW"/>
</dbReference>
<dbReference type="FunFam" id="3.30.479.10:FF:000001">
    <property type="entry name" value="6-carboxy-5,6,7,8-tetrahydropterin synthase"/>
    <property type="match status" value="1"/>
</dbReference>
<dbReference type="Gene3D" id="3.30.479.10">
    <property type="entry name" value="6-pyruvoyl tetrahydropterin synthase/QueD"/>
    <property type="match status" value="1"/>
</dbReference>
<dbReference type="InterPro" id="IPR007115">
    <property type="entry name" value="6-PTP_synth/QueD"/>
</dbReference>
<dbReference type="InterPro" id="IPR038418">
    <property type="entry name" value="6-PTP_synth/QueD_sf"/>
</dbReference>
<dbReference type="NCBIfam" id="TIGR00039">
    <property type="entry name" value="6PTHBS"/>
    <property type="match status" value="1"/>
</dbReference>
<dbReference type="NCBIfam" id="TIGR03367">
    <property type="entry name" value="queuosine_QueD"/>
    <property type="match status" value="1"/>
</dbReference>
<dbReference type="PANTHER" id="PTHR12589:SF7">
    <property type="entry name" value="6-PYRUVOYL TETRAHYDROBIOPTERIN SYNTHASE"/>
    <property type="match status" value="1"/>
</dbReference>
<dbReference type="PANTHER" id="PTHR12589">
    <property type="entry name" value="PYRUVOYL TETRAHYDROBIOPTERIN SYNTHASE"/>
    <property type="match status" value="1"/>
</dbReference>
<dbReference type="Pfam" id="PF01242">
    <property type="entry name" value="PTPS"/>
    <property type="match status" value="1"/>
</dbReference>
<dbReference type="PIRSF" id="PIRSF006113">
    <property type="entry name" value="PTP_synth"/>
    <property type="match status" value="1"/>
</dbReference>
<dbReference type="SUPFAM" id="SSF55620">
    <property type="entry name" value="Tetrahydrobiopterin biosynthesis enzymes-like"/>
    <property type="match status" value="1"/>
</dbReference>
<gene>
    <name type="primary">queD</name>
    <name type="synonym">ygcM</name>
    <name type="ordered locus">Z4075</name>
    <name type="ordered locus">ECs3620</name>
</gene>
<sequence length="121" mass="13773">MMSTTLFKDFTFEAAHRLPHVPEGHKCGRLHGHSFMVRLEITGEVDPHTGWIIDFAELKAAFKPTYERLDHHYLNDIPGLENPTSEVLAKWIWDQVKPVVPLLSAVMVKETCTAGCIYRGE</sequence>
<evidence type="ECO:0000250" key="1"/>
<evidence type="ECO:0000305" key="2"/>
<organism>
    <name type="scientific">Escherichia coli O157:H7</name>
    <dbReference type="NCBI Taxonomy" id="83334"/>
    <lineage>
        <taxon>Bacteria</taxon>
        <taxon>Pseudomonadati</taxon>
        <taxon>Pseudomonadota</taxon>
        <taxon>Gammaproteobacteria</taxon>
        <taxon>Enterobacterales</taxon>
        <taxon>Enterobacteriaceae</taxon>
        <taxon>Escherichia</taxon>
    </lineage>
</organism>
<accession>P65871</accession>
<accession>Q46903</accession>
<protein>
    <recommendedName>
        <fullName>6-carboxy-5,6,7,8-tetrahydropterin synthase</fullName>
        <shortName>CPH4 synthase</shortName>
        <ecNumber>4.1.2.50</ecNumber>
    </recommendedName>
    <alternativeName>
        <fullName>Queuosine biosynthesis protein QueD</fullName>
    </alternativeName>
</protein>
<feature type="chain" id="PRO_0000057923" description="6-carboxy-5,6,7,8-tetrahydropterin synthase">
    <location>
        <begin position="1"/>
        <end position="121"/>
    </location>
</feature>
<feature type="active site" description="Proton acceptor" evidence="1">
    <location>
        <position position="27"/>
    </location>
</feature>
<feature type="active site" description="Charge relay system" evidence="1">
    <location>
        <position position="71"/>
    </location>
</feature>
<feature type="active site" description="Charge relay system" evidence="1">
    <location>
        <position position="110"/>
    </location>
</feature>
<feature type="binding site" evidence="1">
    <location>
        <position position="16"/>
    </location>
    <ligand>
        <name>Zn(2+)</name>
        <dbReference type="ChEBI" id="CHEBI:29105"/>
    </ligand>
</feature>
<feature type="binding site" evidence="1">
    <location>
        <position position="31"/>
    </location>
    <ligand>
        <name>Zn(2+)</name>
        <dbReference type="ChEBI" id="CHEBI:29105"/>
    </ligand>
</feature>
<feature type="binding site" evidence="1">
    <location>
        <position position="33"/>
    </location>
    <ligand>
        <name>Zn(2+)</name>
        <dbReference type="ChEBI" id="CHEBI:29105"/>
    </ligand>
</feature>
<proteinExistence type="inferred from homology"/>
<keyword id="KW-0456">Lyase</keyword>
<keyword id="KW-0479">Metal-binding</keyword>
<keyword id="KW-0671">Queuosine biosynthesis</keyword>
<keyword id="KW-1185">Reference proteome</keyword>
<keyword id="KW-0862">Zinc</keyword>
<name>QUED_ECO57</name>
<comment type="function">
    <text evidence="1">Catalyzes the conversion of 7,8-dihydroneopterin triphosphate (H2NTP) to 6-carboxy-5,6,7,8-tetrahydropterin (CPH4) and acetaldehyde.</text>
</comment>
<comment type="catalytic activity">
    <reaction>
        <text>7,8-dihydroneopterin 3'-triphosphate + H2O = 6-carboxy-5,6,7,8-tetrahydropterin + triphosphate + acetaldehyde + 2 H(+)</text>
        <dbReference type="Rhea" id="RHEA:27966"/>
        <dbReference type="ChEBI" id="CHEBI:15343"/>
        <dbReference type="ChEBI" id="CHEBI:15377"/>
        <dbReference type="ChEBI" id="CHEBI:15378"/>
        <dbReference type="ChEBI" id="CHEBI:18036"/>
        <dbReference type="ChEBI" id="CHEBI:58462"/>
        <dbReference type="ChEBI" id="CHEBI:61032"/>
        <dbReference type="EC" id="4.1.2.50"/>
    </reaction>
</comment>
<comment type="cofactor">
    <cofactor evidence="1">
        <name>Zn(2+)</name>
        <dbReference type="ChEBI" id="CHEBI:29105"/>
    </cofactor>
    <text evidence="1">Binds 1 zinc ion per subunit.</text>
</comment>
<comment type="pathway">
    <text>Purine metabolism; 7-cyano-7-deazaguanine biosynthesis.</text>
</comment>
<comment type="miscellaneous">
    <text evidence="1">The active site is at the interface between 2 subunits. The proton acceptor Cys is on one subunit, and the charge relay system is on the other subunit (By similarity).</text>
</comment>
<comment type="similarity">
    <text evidence="2">Belongs to the PTPS family. QueD subfamily.</text>
</comment>